<dbReference type="EC" id="1.7.1.7" evidence="1"/>
<dbReference type="EMBL" id="CP001600">
    <property type="protein sequence ID" value="ACR67971.1"/>
    <property type="molecule type" value="Genomic_DNA"/>
</dbReference>
<dbReference type="RefSeq" id="WP_015870164.1">
    <property type="nucleotide sequence ID" value="NZ_CP169062.1"/>
</dbReference>
<dbReference type="SMR" id="C5B9H0"/>
<dbReference type="STRING" id="67780.B6E78_14380"/>
<dbReference type="KEGG" id="eic:NT01EI_0750"/>
<dbReference type="PATRIC" id="fig|634503.3.peg.678"/>
<dbReference type="HOGENOM" id="CLU_022552_5_3_6"/>
<dbReference type="OrthoDB" id="9805398at2"/>
<dbReference type="Proteomes" id="UP000001485">
    <property type="component" value="Chromosome"/>
</dbReference>
<dbReference type="GO" id="GO:0005829">
    <property type="term" value="C:cytosol"/>
    <property type="evidence" value="ECO:0007669"/>
    <property type="project" value="TreeGrafter"/>
</dbReference>
<dbReference type="GO" id="GO:1902560">
    <property type="term" value="C:GMP reductase complex"/>
    <property type="evidence" value="ECO:0007669"/>
    <property type="project" value="InterPro"/>
</dbReference>
<dbReference type="GO" id="GO:0003920">
    <property type="term" value="F:GMP reductase activity"/>
    <property type="evidence" value="ECO:0007669"/>
    <property type="project" value="UniProtKB-UniRule"/>
</dbReference>
<dbReference type="GO" id="GO:0046872">
    <property type="term" value="F:metal ion binding"/>
    <property type="evidence" value="ECO:0007669"/>
    <property type="project" value="UniProtKB-KW"/>
</dbReference>
<dbReference type="GO" id="GO:0006163">
    <property type="term" value="P:purine nucleotide metabolic process"/>
    <property type="evidence" value="ECO:0007669"/>
    <property type="project" value="UniProtKB-UniRule"/>
</dbReference>
<dbReference type="CDD" id="cd00381">
    <property type="entry name" value="IMPDH"/>
    <property type="match status" value="1"/>
</dbReference>
<dbReference type="FunFam" id="3.20.20.70:FF:000012">
    <property type="entry name" value="GMP reductase"/>
    <property type="match status" value="1"/>
</dbReference>
<dbReference type="Gene3D" id="3.20.20.70">
    <property type="entry name" value="Aldolase class I"/>
    <property type="match status" value="1"/>
</dbReference>
<dbReference type="HAMAP" id="MF_00596">
    <property type="entry name" value="GMP_reduct_type1"/>
    <property type="match status" value="1"/>
</dbReference>
<dbReference type="InterPro" id="IPR013785">
    <property type="entry name" value="Aldolase_TIM"/>
</dbReference>
<dbReference type="InterPro" id="IPR050139">
    <property type="entry name" value="GMP_reductase"/>
</dbReference>
<dbReference type="InterPro" id="IPR005993">
    <property type="entry name" value="GMPR"/>
</dbReference>
<dbReference type="InterPro" id="IPR015875">
    <property type="entry name" value="IMP_DH/GMP_Rdtase_CS"/>
</dbReference>
<dbReference type="InterPro" id="IPR001093">
    <property type="entry name" value="IMP_DH_GMPRt"/>
</dbReference>
<dbReference type="NCBIfam" id="TIGR01305">
    <property type="entry name" value="GMP_reduct_1"/>
    <property type="match status" value="1"/>
</dbReference>
<dbReference type="NCBIfam" id="NF003470">
    <property type="entry name" value="PRK05096.1"/>
    <property type="match status" value="1"/>
</dbReference>
<dbReference type="PANTHER" id="PTHR43170">
    <property type="entry name" value="GMP REDUCTASE"/>
    <property type="match status" value="1"/>
</dbReference>
<dbReference type="PANTHER" id="PTHR43170:SF5">
    <property type="entry name" value="GMP REDUCTASE"/>
    <property type="match status" value="1"/>
</dbReference>
<dbReference type="Pfam" id="PF00478">
    <property type="entry name" value="IMPDH"/>
    <property type="match status" value="1"/>
</dbReference>
<dbReference type="PIRSF" id="PIRSF000235">
    <property type="entry name" value="GMP_reductase"/>
    <property type="match status" value="1"/>
</dbReference>
<dbReference type="SMART" id="SM01240">
    <property type="entry name" value="IMPDH"/>
    <property type="match status" value="1"/>
</dbReference>
<dbReference type="SUPFAM" id="SSF51412">
    <property type="entry name" value="Inosine monophosphate dehydrogenase (IMPDH)"/>
    <property type="match status" value="1"/>
</dbReference>
<dbReference type="PROSITE" id="PS00487">
    <property type="entry name" value="IMP_DH_GMP_RED"/>
    <property type="match status" value="1"/>
</dbReference>
<organism>
    <name type="scientific">Edwardsiella ictaluri (strain 93-146)</name>
    <dbReference type="NCBI Taxonomy" id="634503"/>
    <lineage>
        <taxon>Bacteria</taxon>
        <taxon>Pseudomonadati</taxon>
        <taxon>Pseudomonadota</taxon>
        <taxon>Gammaproteobacteria</taxon>
        <taxon>Enterobacterales</taxon>
        <taxon>Hafniaceae</taxon>
        <taxon>Edwardsiella</taxon>
    </lineage>
</organism>
<sequence>MRIEEDLKLGFKDVLIRPKRSTLKSRSDVELAREYRFKHSGWQWSGVPLIAANMDTVGTFSMARVLAGFDVLTAVHKHYSVEQWQSFVSSVGEETLRHVMVSTGTSEADFIKLRQILALSPSLKFICIDVANGYSEHFVDFLRRARDVCPDKVICAGNVVTGEMVEELILSGADIVKVGIGPGSVCTTRVKTGVGYPQLSAVIECADAAHGLGGQIVSDGGCTMPGDVAKAFGGGADFVMLGGMLAAHAECEGRIVEEQGRKMMLFYGMSSASAMNRHVGGVADYRAAEGKTVSLPLRGPVENTVRDILGGLRSACTYVGASRLKELTKRTTFIRVAEQENRVFGRAD</sequence>
<feature type="chain" id="PRO_1000212181" description="GMP reductase">
    <location>
        <begin position="1"/>
        <end position="348"/>
    </location>
</feature>
<feature type="active site" description="Thioimidate intermediate" evidence="1">
    <location>
        <position position="186"/>
    </location>
</feature>
<feature type="binding site" evidence="1">
    <location>
        <begin position="108"/>
        <end position="131"/>
    </location>
    <ligand>
        <name>NADP(+)</name>
        <dbReference type="ChEBI" id="CHEBI:58349"/>
    </ligand>
</feature>
<feature type="binding site" evidence="1">
    <location>
        <position position="181"/>
    </location>
    <ligand>
        <name>K(+)</name>
        <dbReference type="ChEBI" id="CHEBI:29103"/>
    </ligand>
</feature>
<feature type="binding site" evidence="1">
    <location>
        <position position="183"/>
    </location>
    <ligand>
        <name>K(+)</name>
        <dbReference type="ChEBI" id="CHEBI:29103"/>
    </ligand>
</feature>
<feature type="binding site" evidence="1">
    <location>
        <begin position="216"/>
        <end position="239"/>
    </location>
    <ligand>
        <name>NADP(+)</name>
        <dbReference type="ChEBI" id="CHEBI:58349"/>
    </ligand>
</feature>
<gene>
    <name evidence="1" type="primary">guaC</name>
    <name type="ordered locus">NT01EI_0750</name>
</gene>
<accession>C5B9H0</accession>
<keyword id="KW-0479">Metal-binding</keyword>
<keyword id="KW-0521">NADP</keyword>
<keyword id="KW-0560">Oxidoreductase</keyword>
<keyword id="KW-0630">Potassium</keyword>
<name>GUAC_EDWI9</name>
<proteinExistence type="inferred from homology"/>
<comment type="function">
    <text evidence="1">Catalyzes the irreversible NADPH-dependent deamination of GMP to IMP. It functions in the conversion of nucleobase, nucleoside and nucleotide derivatives of G to A nucleotides, and in maintaining the intracellular balance of A and G nucleotides.</text>
</comment>
<comment type="catalytic activity">
    <reaction evidence="1">
        <text>IMP + NH4(+) + NADP(+) = GMP + NADPH + 2 H(+)</text>
        <dbReference type="Rhea" id="RHEA:17185"/>
        <dbReference type="ChEBI" id="CHEBI:15378"/>
        <dbReference type="ChEBI" id="CHEBI:28938"/>
        <dbReference type="ChEBI" id="CHEBI:57783"/>
        <dbReference type="ChEBI" id="CHEBI:58053"/>
        <dbReference type="ChEBI" id="CHEBI:58115"/>
        <dbReference type="ChEBI" id="CHEBI:58349"/>
        <dbReference type="EC" id="1.7.1.7"/>
    </reaction>
</comment>
<comment type="subunit">
    <text evidence="1">Homotetramer.</text>
</comment>
<comment type="similarity">
    <text evidence="1">Belongs to the IMPDH/GMPR family. GuaC type 1 subfamily.</text>
</comment>
<protein>
    <recommendedName>
        <fullName evidence="1">GMP reductase</fullName>
        <ecNumber evidence="1">1.7.1.7</ecNumber>
    </recommendedName>
    <alternativeName>
        <fullName evidence="1">Guanosine 5'-monophosphate oxidoreductase</fullName>
        <shortName evidence="1">Guanosine monophosphate reductase</shortName>
    </alternativeName>
</protein>
<evidence type="ECO:0000255" key="1">
    <source>
        <dbReference type="HAMAP-Rule" id="MF_00596"/>
    </source>
</evidence>
<reference key="1">
    <citation type="submission" date="2009-03" db="EMBL/GenBank/DDBJ databases">
        <title>Complete genome sequence of Edwardsiella ictaluri 93-146.</title>
        <authorList>
            <person name="Williams M.L."/>
            <person name="Gillaspy A.F."/>
            <person name="Dyer D.W."/>
            <person name="Thune R.L."/>
            <person name="Waldbieser G.C."/>
            <person name="Schuster S.C."/>
            <person name="Gipson J."/>
            <person name="Zaitshik J."/>
            <person name="Landry C."/>
            <person name="Lawrence M.L."/>
        </authorList>
    </citation>
    <scope>NUCLEOTIDE SEQUENCE [LARGE SCALE GENOMIC DNA]</scope>
    <source>
        <strain>93-146</strain>
    </source>
</reference>